<reference key="1">
    <citation type="journal article" date="2004" name="J. Mammal.">
        <title>Systematics of Vampyressa and related genera of phyllostomid bats as determined by cytochrome-b sequences.</title>
        <authorList>
            <person name="Porter C.A."/>
            <person name="Baker R.J."/>
        </authorList>
    </citation>
    <scope>NUCLEOTIDE SEQUENCE [GENOMIC DNA]</scope>
</reference>
<proteinExistence type="inferred from homology"/>
<comment type="function">
    <text evidence="2">Component of the ubiquinol-cytochrome c reductase complex (complex III or cytochrome b-c1 complex) that is part of the mitochondrial respiratory chain. The b-c1 complex mediates electron transfer from ubiquinol to cytochrome c. Contributes to the generation of a proton gradient across the mitochondrial membrane that is then used for ATP synthesis.</text>
</comment>
<comment type="cofactor">
    <cofactor evidence="2">
        <name>heme b</name>
        <dbReference type="ChEBI" id="CHEBI:60344"/>
    </cofactor>
    <text evidence="2">Binds 2 heme b groups non-covalently.</text>
</comment>
<comment type="subunit">
    <text evidence="2">The cytochrome bc1 complex contains 11 subunits: 3 respiratory subunits (MT-CYB, CYC1 and UQCRFS1), 2 core proteins (UQCRC1 and UQCRC2) and 6 low-molecular weight proteins (UQCRH/QCR6, UQCRB/QCR7, UQCRQ/QCR8, UQCR10/QCR9, UQCR11/QCR10 and a cleavage product of UQCRFS1). This cytochrome bc1 complex then forms a dimer.</text>
</comment>
<comment type="subcellular location">
    <subcellularLocation>
        <location evidence="2">Mitochondrion inner membrane</location>
        <topology evidence="2">Multi-pass membrane protein</topology>
    </subcellularLocation>
</comment>
<comment type="miscellaneous">
    <text evidence="1">Heme 1 (or BL or b562) is low-potential and absorbs at about 562 nm, and heme 2 (or BH or b566) is high-potential and absorbs at about 566 nm.</text>
</comment>
<comment type="similarity">
    <text evidence="3 4">Belongs to the cytochrome b family.</text>
</comment>
<comment type="caution">
    <text evidence="2">The full-length protein contains only eight transmembrane helices, not nine as predicted by bioinformatics tools.</text>
</comment>
<keyword id="KW-0249">Electron transport</keyword>
<keyword id="KW-0349">Heme</keyword>
<keyword id="KW-0408">Iron</keyword>
<keyword id="KW-0472">Membrane</keyword>
<keyword id="KW-0479">Metal-binding</keyword>
<keyword id="KW-0496">Mitochondrion</keyword>
<keyword id="KW-0999">Mitochondrion inner membrane</keyword>
<keyword id="KW-0679">Respiratory chain</keyword>
<keyword id="KW-0812">Transmembrane</keyword>
<keyword id="KW-1133">Transmembrane helix</keyword>
<keyword id="KW-0813">Transport</keyword>
<keyword id="KW-0830">Ubiquinone</keyword>
<accession>Q6YDK5</accession>
<evidence type="ECO:0000250" key="1"/>
<evidence type="ECO:0000250" key="2">
    <source>
        <dbReference type="UniProtKB" id="P00157"/>
    </source>
</evidence>
<evidence type="ECO:0000255" key="3">
    <source>
        <dbReference type="PROSITE-ProRule" id="PRU00967"/>
    </source>
</evidence>
<evidence type="ECO:0000255" key="4">
    <source>
        <dbReference type="PROSITE-ProRule" id="PRU00968"/>
    </source>
</evidence>
<dbReference type="EMBL" id="AY157045">
    <property type="protein sequence ID" value="AAO16541.1"/>
    <property type="molecule type" value="Genomic_DNA"/>
</dbReference>
<dbReference type="EMBL" id="AY157055">
    <property type="protein sequence ID" value="AAO16551.1"/>
    <property type="molecule type" value="Genomic_DNA"/>
</dbReference>
<dbReference type="EMBL" id="AY157044">
    <property type="protein sequence ID" value="AAO16540.1"/>
    <property type="molecule type" value="Genomic_DNA"/>
</dbReference>
<dbReference type="SMR" id="Q6YDK5"/>
<dbReference type="GO" id="GO:0005743">
    <property type="term" value="C:mitochondrial inner membrane"/>
    <property type="evidence" value="ECO:0007669"/>
    <property type="project" value="UniProtKB-SubCell"/>
</dbReference>
<dbReference type="GO" id="GO:0045275">
    <property type="term" value="C:respiratory chain complex III"/>
    <property type="evidence" value="ECO:0007669"/>
    <property type="project" value="InterPro"/>
</dbReference>
<dbReference type="GO" id="GO:0046872">
    <property type="term" value="F:metal ion binding"/>
    <property type="evidence" value="ECO:0007669"/>
    <property type="project" value="UniProtKB-KW"/>
</dbReference>
<dbReference type="GO" id="GO:0008121">
    <property type="term" value="F:ubiquinol-cytochrome-c reductase activity"/>
    <property type="evidence" value="ECO:0007669"/>
    <property type="project" value="InterPro"/>
</dbReference>
<dbReference type="GO" id="GO:0006122">
    <property type="term" value="P:mitochondrial electron transport, ubiquinol to cytochrome c"/>
    <property type="evidence" value="ECO:0007669"/>
    <property type="project" value="TreeGrafter"/>
</dbReference>
<dbReference type="CDD" id="cd00290">
    <property type="entry name" value="cytochrome_b_C"/>
    <property type="match status" value="1"/>
</dbReference>
<dbReference type="CDD" id="cd00284">
    <property type="entry name" value="Cytochrome_b_N"/>
    <property type="match status" value="1"/>
</dbReference>
<dbReference type="FunFam" id="1.20.810.10:FF:000002">
    <property type="entry name" value="Cytochrome b"/>
    <property type="match status" value="1"/>
</dbReference>
<dbReference type="Gene3D" id="1.20.810.10">
    <property type="entry name" value="Cytochrome Bc1 Complex, Chain C"/>
    <property type="match status" value="1"/>
</dbReference>
<dbReference type="InterPro" id="IPR005798">
    <property type="entry name" value="Cyt_b/b6_C"/>
</dbReference>
<dbReference type="InterPro" id="IPR036150">
    <property type="entry name" value="Cyt_b/b6_C_sf"/>
</dbReference>
<dbReference type="InterPro" id="IPR005797">
    <property type="entry name" value="Cyt_b/b6_N"/>
</dbReference>
<dbReference type="InterPro" id="IPR027387">
    <property type="entry name" value="Cytb/b6-like_sf"/>
</dbReference>
<dbReference type="InterPro" id="IPR030689">
    <property type="entry name" value="Cytochrome_b"/>
</dbReference>
<dbReference type="InterPro" id="IPR048260">
    <property type="entry name" value="Cytochrome_b_C_euk/bac"/>
</dbReference>
<dbReference type="InterPro" id="IPR048259">
    <property type="entry name" value="Cytochrome_b_N_euk/bac"/>
</dbReference>
<dbReference type="InterPro" id="IPR016174">
    <property type="entry name" value="Di-haem_cyt_TM"/>
</dbReference>
<dbReference type="PANTHER" id="PTHR19271">
    <property type="entry name" value="CYTOCHROME B"/>
    <property type="match status" value="1"/>
</dbReference>
<dbReference type="PANTHER" id="PTHR19271:SF16">
    <property type="entry name" value="CYTOCHROME B"/>
    <property type="match status" value="1"/>
</dbReference>
<dbReference type="Pfam" id="PF00032">
    <property type="entry name" value="Cytochrom_B_C"/>
    <property type="match status" value="1"/>
</dbReference>
<dbReference type="Pfam" id="PF00033">
    <property type="entry name" value="Cytochrome_B"/>
    <property type="match status" value="1"/>
</dbReference>
<dbReference type="PIRSF" id="PIRSF038885">
    <property type="entry name" value="COB"/>
    <property type="match status" value="1"/>
</dbReference>
<dbReference type="SUPFAM" id="SSF81648">
    <property type="entry name" value="a domain/subunit of cytochrome bc1 complex (Ubiquinol-cytochrome c reductase)"/>
    <property type="match status" value="1"/>
</dbReference>
<dbReference type="SUPFAM" id="SSF81342">
    <property type="entry name" value="Transmembrane di-heme cytochromes"/>
    <property type="match status" value="1"/>
</dbReference>
<dbReference type="PROSITE" id="PS51003">
    <property type="entry name" value="CYTB_CTER"/>
    <property type="match status" value="1"/>
</dbReference>
<dbReference type="PROSITE" id="PS51002">
    <property type="entry name" value="CYTB_NTER"/>
    <property type="match status" value="1"/>
</dbReference>
<gene>
    <name type="primary">MT-CYB</name>
    <name type="synonym">COB</name>
    <name type="synonym">CYTB</name>
    <name type="synonym">MTCYB</name>
</gene>
<protein>
    <recommendedName>
        <fullName>Cytochrome b</fullName>
    </recommendedName>
    <alternativeName>
        <fullName>Complex III subunit 3</fullName>
    </alternativeName>
    <alternativeName>
        <fullName>Complex III subunit III</fullName>
    </alternativeName>
    <alternativeName>
        <fullName>Cytochrome b-c1 complex subunit 3</fullName>
    </alternativeName>
    <alternativeName>
        <fullName>Ubiquinol-cytochrome-c reductase complex cytochrome b subunit</fullName>
    </alternativeName>
</protein>
<name>CYB_VAMBI</name>
<sequence length="379" mass="42589">MTNIRKTHPLLKIINSSFVDLPAPSSLSSWWNFGSLLGVCLGVQILTGLFLAMHYTSDTATAFNSVTHICRDVNYGWLLRYLHANGASMFFICLYLHVGRGLYYGSYTYSETWNVGILLLFAVMATAFMGYVLPWGQMSFWGATVITNLLSAIPYIGTDLVQWIWGGFSVDKATLTRFFAFHFLLPFIVTALVMVHLLFLHETGSNNPTGIPSDPDMIPFHPYYTIKDILGFLIMLTALSALVLFSPDLLGDPDNYIPANPLNTPPHIKPEWYFLFAYAILRSIPNKLGGVLALVMSILILAVVPILHLSKQRSMMFRPLSQCLFWLLVAVLFTLTWIGGQPVEHPYIIIGQTASVLYFLIILVLMPATSLMENYLLKW</sequence>
<feature type="chain" id="PRO_0000061708" description="Cytochrome b">
    <location>
        <begin position="1"/>
        <end position="379"/>
    </location>
</feature>
<feature type="transmembrane region" description="Helical" evidence="2">
    <location>
        <begin position="33"/>
        <end position="53"/>
    </location>
</feature>
<feature type="transmembrane region" description="Helical" evidence="2">
    <location>
        <begin position="77"/>
        <end position="98"/>
    </location>
</feature>
<feature type="transmembrane region" description="Helical" evidence="2">
    <location>
        <begin position="113"/>
        <end position="133"/>
    </location>
</feature>
<feature type="transmembrane region" description="Helical" evidence="2">
    <location>
        <begin position="178"/>
        <end position="198"/>
    </location>
</feature>
<feature type="transmembrane region" description="Helical" evidence="2">
    <location>
        <begin position="226"/>
        <end position="246"/>
    </location>
</feature>
<feature type="transmembrane region" description="Helical" evidence="2">
    <location>
        <begin position="288"/>
        <end position="308"/>
    </location>
</feature>
<feature type="transmembrane region" description="Helical" evidence="2">
    <location>
        <begin position="320"/>
        <end position="340"/>
    </location>
</feature>
<feature type="transmembrane region" description="Helical" evidence="2">
    <location>
        <begin position="347"/>
        <end position="367"/>
    </location>
</feature>
<feature type="binding site" description="axial binding residue" evidence="2">
    <location>
        <position position="83"/>
    </location>
    <ligand>
        <name>heme b</name>
        <dbReference type="ChEBI" id="CHEBI:60344"/>
        <label>b562</label>
    </ligand>
    <ligandPart>
        <name>Fe</name>
        <dbReference type="ChEBI" id="CHEBI:18248"/>
    </ligandPart>
</feature>
<feature type="binding site" description="axial binding residue" evidence="2">
    <location>
        <position position="97"/>
    </location>
    <ligand>
        <name>heme b</name>
        <dbReference type="ChEBI" id="CHEBI:60344"/>
        <label>b566</label>
    </ligand>
    <ligandPart>
        <name>Fe</name>
        <dbReference type="ChEBI" id="CHEBI:18248"/>
    </ligandPart>
</feature>
<feature type="binding site" description="axial binding residue" evidence="2">
    <location>
        <position position="182"/>
    </location>
    <ligand>
        <name>heme b</name>
        <dbReference type="ChEBI" id="CHEBI:60344"/>
        <label>b562</label>
    </ligand>
    <ligandPart>
        <name>Fe</name>
        <dbReference type="ChEBI" id="CHEBI:18248"/>
    </ligandPart>
</feature>
<feature type="binding site" description="axial binding residue" evidence="2">
    <location>
        <position position="196"/>
    </location>
    <ligand>
        <name>heme b</name>
        <dbReference type="ChEBI" id="CHEBI:60344"/>
        <label>b566</label>
    </ligand>
    <ligandPart>
        <name>Fe</name>
        <dbReference type="ChEBI" id="CHEBI:18248"/>
    </ligandPart>
</feature>
<feature type="binding site" evidence="2">
    <location>
        <position position="201"/>
    </location>
    <ligand>
        <name>a ubiquinone</name>
        <dbReference type="ChEBI" id="CHEBI:16389"/>
    </ligand>
</feature>
<geneLocation type="mitochondrion"/>
<organism>
    <name type="scientific">Vampyressa bidens</name>
    <name type="common">Bidentate yellow-eared bat</name>
    <name type="synonym">Vampyriscus bidens</name>
    <dbReference type="NCBI Taxonomy" id="148039"/>
    <lineage>
        <taxon>Eukaryota</taxon>
        <taxon>Metazoa</taxon>
        <taxon>Chordata</taxon>
        <taxon>Craniata</taxon>
        <taxon>Vertebrata</taxon>
        <taxon>Euteleostomi</taxon>
        <taxon>Mammalia</taxon>
        <taxon>Eutheria</taxon>
        <taxon>Laurasiatheria</taxon>
        <taxon>Chiroptera</taxon>
        <taxon>Yangochiroptera</taxon>
        <taxon>Phyllostomidae</taxon>
        <taxon>Stenodermatinae</taxon>
        <taxon>Vampyressa</taxon>
    </lineage>
</organism>